<protein>
    <recommendedName>
        <fullName>Uncharacterized protein YGR240C-A</fullName>
    </recommendedName>
</protein>
<proteinExistence type="predicted"/>
<organism>
    <name type="scientific">Saccharomyces cerevisiae (strain ATCC 204508 / S288c)</name>
    <name type="common">Baker's yeast</name>
    <dbReference type="NCBI Taxonomy" id="559292"/>
    <lineage>
        <taxon>Eukaryota</taxon>
        <taxon>Fungi</taxon>
        <taxon>Dikarya</taxon>
        <taxon>Ascomycota</taxon>
        <taxon>Saccharomycotina</taxon>
        <taxon>Saccharomycetes</taxon>
        <taxon>Saccharomycetales</taxon>
        <taxon>Saccharomycetaceae</taxon>
        <taxon>Saccharomyces</taxon>
    </lineage>
</organism>
<reference key="1">
    <citation type="journal article" date="1997" name="Nature">
        <title>The nucleotide sequence of Saccharomyces cerevisiae chromosome VII.</title>
        <authorList>
            <person name="Tettelin H."/>
            <person name="Agostoni-Carbone M.L."/>
            <person name="Albermann K."/>
            <person name="Albers M."/>
            <person name="Arroyo J."/>
            <person name="Backes U."/>
            <person name="Barreiros T."/>
            <person name="Bertani I."/>
            <person name="Bjourson A.J."/>
            <person name="Brueckner M."/>
            <person name="Bruschi C.V."/>
            <person name="Carignani G."/>
            <person name="Castagnoli L."/>
            <person name="Cerdan E."/>
            <person name="Clemente M.L."/>
            <person name="Coblenz A."/>
            <person name="Coglievina M."/>
            <person name="Coissac E."/>
            <person name="Defoor E."/>
            <person name="Del Bino S."/>
            <person name="Delius H."/>
            <person name="Delneri D."/>
            <person name="de Wergifosse P."/>
            <person name="Dujon B."/>
            <person name="Durand P."/>
            <person name="Entian K.-D."/>
            <person name="Eraso P."/>
            <person name="Escribano V."/>
            <person name="Fabiani L."/>
            <person name="Fartmann B."/>
            <person name="Feroli F."/>
            <person name="Feuermann M."/>
            <person name="Frontali L."/>
            <person name="Garcia-Gonzalez M."/>
            <person name="Garcia-Saez M.I."/>
            <person name="Goffeau A."/>
            <person name="Guerreiro P."/>
            <person name="Hani J."/>
            <person name="Hansen M."/>
            <person name="Hebling U."/>
            <person name="Hernandez K."/>
            <person name="Heumann K."/>
            <person name="Hilger F."/>
            <person name="Hofmann B."/>
            <person name="Indge K.J."/>
            <person name="James C.M."/>
            <person name="Klima R."/>
            <person name="Koetter P."/>
            <person name="Kramer B."/>
            <person name="Kramer W."/>
            <person name="Lauquin G."/>
            <person name="Leuther H."/>
            <person name="Louis E.J."/>
            <person name="Maillier E."/>
            <person name="Marconi A."/>
            <person name="Martegani E."/>
            <person name="Mazon M.J."/>
            <person name="Mazzoni C."/>
            <person name="McReynolds A.D.K."/>
            <person name="Melchioretto P."/>
            <person name="Mewes H.-W."/>
            <person name="Minenkova O."/>
            <person name="Mueller-Auer S."/>
            <person name="Nawrocki A."/>
            <person name="Netter P."/>
            <person name="Neu R."/>
            <person name="Nombela C."/>
            <person name="Oliver S.G."/>
            <person name="Panzeri L."/>
            <person name="Paoluzi S."/>
            <person name="Plevani P."/>
            <person name="Portetelle D."/>
            <person name="Portillo F."/>
            <person name="Potier S."/>
            <person name="Purnelle B."/>
            <person name="Rieger M."/>
            <person name="Riles L."/>
            <person name="Rinaldi T."/>
            <person name="Robben J."/>
            <person name="Rodrigues-Pousada C."/>
            <person name="Rodriguez-Belmonte E."/>
            <person name="Rodriguez-Torres A.M."/>
            <person name="Rose M."/>
            <person name="Ruzzi M."/>
            <person name="Saliola M."/>
            <person name="Sanchez-Perez M."/>
            <person name="Schaefer B."/>
            <person name="Schaefer M."/>
            <person name="Scharfe M."/>
            <person name="Schmidheini T."/>
            <person name="Schreer A."/>
            <person name="Skala J."/>
            <person name="Souciet J.-L."/>
            <person name="Steensma H.Y."/>
            <person name="Talla E."/>
            <person name="Thierry A."/>
            <person name="Vandenbol M."/>
            <person name="van der Aart Q.J.M."/>
            <person name="Van Dyck L."/>
            <person name="Vanoni M."/>
            <person name="Verhasselt P."/>
            <person name="Voet M."/>
            <person name="Volckaert G."/>
            <person name="Wambutt R."/>
            <person name="Watson M.D."/>
            <person name="Weber N."/>
            <person name="Wedler E."/>
            <person name="Wedler H."/>
            <person name="Wipfli P."/>
            <person name="Wolf K."/>
            <person name="Wright L.F."/>
            <person name="Zaccaria P."/>
            <person name="Zimmermann M."/>
            <person name="Zollner A."/>
            <person name="Kleine K."/>
        </authorList>
    </citation>
    <scope>NUCLEOTIDE SEQUENCE [LARGE SCALE GENOMIC DNA]</scope>
    <source>
        <strain>ATCC 204508 / S288c</strain>
    </source>
</reference>
<reference key="2">
    <citation type="journal article" date="2014" name="G3 (Bethesda)">
        <title>The reference genome sequence of Saccharomyces cerevisiae: Then and now.</title>
        <authorList>
            <person name="Engel S.R."/>
            <person name="Dietrich F.S."/>
            <person name="Fisk D.G."/>
            <person name="Binkley G."/>
            <person name="Balakrishnan R."/>
            <person name="Costanzo M.C."/>
            <person name="Dwight S.S."/>
            <person name="Hitz B.C."/>
            <person name="Karra K."/>
            <person name="Nash R.S."/>
            <person name="Weng S."/>
            <person name="Wong E.D."/>
            <person name="Lloyd P."/>
            <person name="Skrzypek M.S."/>
            <person name="Miyasato S.R."/>
            <person name="Simison M."/>
            <person name="Cherry J.M."/>
        </authorList>
    </citation>
    <scope>GENOME REANNOTATION</scope>
    <source>
        <strain>ATCC 204508 / S288c</strain>
    </source>
</reference>
<reference key="3">
    <citation type="journal article" date="2003" name="Genome Res.">
        <title>Systematic discovery of new genes in the Saccharomyces cerevisiae genome.</title>
        <authorList>
            <person name="Kessler M.M."/>
            <person name="Zeng Q."/>
            <person name="Hogan S."/>
            <person name="Cook R."/>
            <person name="Morales A.J."/>
            <person name="Cottarel G."/>
        </authorList>
    </citation>
    <scope>GENOME REANNOTATION</scope>
</reference>
<accession>Q3E786</accession>
<accession>D6VV21</accession>
<name>YG240_YEAST</name>
<gene>
    <name type="ordered locus">YGR240C-A</name>
</gene>
<sequence>MILSKHVNFTYHTYNLIYNFYPDLTNFGMPGSIYGLQSSLKTMEKHVEIPQSIHHYSPFYQLPLIF</sequence>
<dbReference type="EMBL" id="Z73026">
    <property type="status" value="NOT_ANNOTATED_CDS"/>
    <property type="molecule type" value="Genomic_DNA"/>
</dbReference>
<dbReference type="EMBL" id="BK006941">
    <property type="protein sequence ID" value="DAA08332.1"/>
    <property type="molecule type" value="Genomic_DNA"/>
</dbReference>
<dbReference type="RefSeq" id="NP_878083.1">
    <property type="nucleotide sequence ID" value="NM_001184552.1"/>
</dbReference>
<dbReference type="SMR" id="Q3E786"/>
<dbReference type="BioGRID" id="37005">
    <property type="interactions" value="53"/>
</dbReference>
<dbReference type="FunCoup" id="Q3E786">
    <property type="interactions" value="11"/>
</dbReference>
<dbReference type="PaxDb" id="4932-YGR240C-A"/>
<dbReference type="EnsemblFungi" id="YGR240C-A_mRNA">
    <property type="protein sequence ID" value="YGR240C-A"/>
    <property type="gene ID" value="YGR240C-A"/>
</dbReference>
<dbReference type="GeneID" id="1466463"/>
<dbReference type="KEGG" id="sce:YGR240C-A"/>
<dbReference type="AGR" id="SGD:S000028551"/>
<dbReference type="SGD" id="S000028551">
    <property type="gene designation" value="YGR240C-A"/>
</dbReference>
<dbReference type="VEuPathDB" id="FungiDB:YGR240C-A"/>
<dbReference type="HOGENOM" id="CLU_2833121_0_0_1"/>
<dbReference type="InParanoid" id="Q3E786"/>
<dbReference type="OrthoDB" id="10270668at2759"/>
<dbReference type="BioCyc" id="YEAST:G3O-31012-MONOMER"/>
<dbReference type="BioGRID-ORCS" id="1466463">
    <property type="hits" value="0 hits in 10 CRISPR screens"/>
</dbReference>
<dbReference type="PRO" id="PR:Q3E786"/>
<dbReference type="Proteomes" id="UP000002311">
    <property type="component" value="Chromosome VII"/>
</dbReference>
<dbReference type="RNAct" id="Q3E786">
    <property type="molecule type" value="protein"/>
</dbReference>
<keyword id="KW-1185">Reference proteome</keyword>
<feature type="chain" id="PRO_0000245389" description="Uncharacterized protein YGR240C-A">
    <location>
        <begin position="1"/>
        <end position="66"/>
    </location>
</feature>